<accession>P32718</accession>
<accession>Q2M6L9</accession>
<reference key="1">
    <citation type="journal article" date="1993" name="Nucleic Acids Res.">
        <title>Analysis of the Escherichia coli genome. IV. DNA sequence of the region from 89.2 to 92.8 minutes.</title>
        <authorList>
            <person name="Blattner F.R."/>
            <person name="Burland V.D."/>
            <person name="Plunkett G. III"/>
            <person name="Sofia H.J."/>
            <person name="Daniels D.L."/>
        </authorList>
    </citation>
    <scope>NUCLEOTIDE SEQUENCE [LARGE SCALE GENOMIC DNA]</scope>
    <source>
        <strain>K12 / MG1655 / ATCC 47076</strain>
    </source>
</reference>
<reference key="2">
    <citation type="journal article" date="1997" name="Science">
        <title>The complete genome sequence of Escherichia coli K-12.</title>
        <authorList>
            <person name="Blattner F.R."/>
            <person name="Plunkett G. III"/>
            <person name="Bloch C.A."/>
            <person name="Perna N.T."/>
            <person name="Burland V."/>
            <person name="Riley M."/>
            <person name="Collado-Vides J."/>
            <person name="Glasner J.D."/>
            <person name="Rode C.K."/>
            <person name="Mayhew G.F."/>
            <person name="Gregor J."/>
            <person name="Davis N.W."/>
            <person name="Kirkpatrick H.A."/>
            <person name="Goeden M.A."/>
            <person name="Rose D.J."/>
            <person name="Mau B."/>
            <person name="Shao Y."/>
        </authorList>
    </citation>
    <scope>NUCLEOTIDE SEQUENCE [LARGE SCALE GENOMIC DNA]</scope>
    <source>
        <strain>K12 / MG1655 / ATCC 47076</strain>
    </source>
</reference>
<reference key="3">
    <citation type="journal article" date="2006" name="Mol. Syst. Biol.">
        <title>Highly accurate genome sequences of Escherichia coli K-12 strains MG1655 and W3110.</title>
        <authorList>
            <person name="Hayashi K."/>
            <person name="Morooka N."/>
            <person name="Yamamoto Y."/>
            <person name="Fujita K."/>
            <person name="Isono K."/>
            <person name="Choi S."/>
            <person name="Ohtsubo E."/>
            <person name="Baba T."/>
            <person name="Wanner B.L."/>
            <person name="Mori H."/>
            <person name="Horiuchi T."/>
        </authorList>
    </citation>
    <scope>NUCLEOTIDE SEQUENCE [LARGE SCALE GENOMIC DNA]</scope>
    <source>
        <strain>K12 / W3110 / ATCC 27325 / DSM 5911</strain>
    </source>
</reference>
<reference key="4">
    <citation type="journal article" date="1997" name="J. Bacteriol.">
        <title>The D-allose operon of Escherichia coli K-12.</title>
        <authorList>
            <person name="Kim C."/>
            <person name="Song S."/>
            <person name="Park C."/>
        </authorList>
    </citation>
    <scope>FUNCTION</scope>
    <source>
        <strain>K12</strain>
    </source>
</reference>
<reference key="5">
    <citation type="journal article" date="2007" name="Biochemistry">
        <title>Divergent evolution of function in the ROK sugar kinase superfamily: role of enzyme loops in substrate specificity.</title>
        <authorList>
            <person name="Larion M."/>
            <person name="Moore L.B."/>
            <person name="Thompson S.M."/>
            <person name="Miller B.G."/>
        </authorList>
    </citation>
    <scope>FUNCTION</scope>
    <scope>CATALYTIC ACTIVITY</scope>
    <scope>SUBSTRATE SPECIFICITY</scope>
    <scope>KINETIC PARAMETERS</scope>
    <scope>MUTAGENESIS OF ALA-73 AND PHE-145</scope>
</reference>
<reference key="6">
    <citation type="submission" date="2009-06" db="PDB data bank">
        <title>Crystal structure of D-allose kinase (NP_418508.1) from Escherichia coli K12 at 1.95 A resolution.</title>
        <authorList>
            <consortium name="Joint Center for Structural Genomics (JCSG)"/>
        </authorList>
    </citation>
    <scope>X-RAY CRYSTALLOGRAPHY (1.95 ANGSTROMS)</scope>
</reference>
<dbReference type="EC" id="2.7.1.55" evidence="1"/>
<dbReference type="EMBL" id="U00006">
    <property type="protein sequence ID" value="AAC43178.1"/>
    <property type="molecule type" value="Genomic_DNA"/>
</dbReference>
<dbReference type="EMBL" id="U00096">
    <property type="protein sequence ID" value="AAC77045.1"/>
    <property type="molecule type" value="Genomic_DNA"/>
</dbReference>
<dbReference type="EMBL" id="AP009048">
    <property type="protein sequence ID" value="BAE78087.1"/>
    <property type="molecule type" value="Genomic_DNA"/>
</dbReference>
<dbReference type="PIR" id="C65217">
    <property type="entry name" value="C65217"/>
</dbReference>
<dbReference type="RefSeq" id="NP_418508.1">
    <property type="nucleotide sequence ID" value="NC_000913.3"/>
</dbReference>
<dbReference type="RefSeq" id="WP_001171687.1">
    <property type="nucleotide sequence ID" value="NZ_SSZK01000016.1"/>
</dbReference>
<dbReference type="PDB" id="3HTV">
    <property type="method" value="X-ray"/>
    <property type="resolution" value="1.95 A"/>
    <property type="chains" value="A=1-309"/>
</dbReference>
<dbReference type="PDBsum" id="3HTV"/>
<dbReference type="SMR" id="P32718"/>
<dbReference type="BioGRID" id="4262956">
    <property type="interactions" value="17"/>
</dbReference>
<dbReference type="BioGRID" id="852890">
    <property type="interactions" value="2"/>
</dbReference>
<dbReference type="DIP" id="DIP-9097N"/>
<dbReference type="FunCoup" id="P32718">
    <property type="interactions" value="69"/>
</dbReference>
<dbReference type="IntAct" id="P32718">
    <property type="interactions" value="4"/>
</dbReference>
<dbReference type="STRING" id="511145.b4084"/>
<dbReference type="PaxDb" id="511145-b4084"/>
<dbReference type="DNASU" id="948596"/>
<dbReference type="EnsemblBacteria" id="AAC77045">
    <property type="protein sequence ID" value="AAC77045"/>
    <property type="gene ID" value="b4084"/>
</dbReference>
<dbReference type="GeneID" id="948596"/>
<dbReference type="KEGG" id="ecj:JW5724"/>
<dbReference type="KEGG" id="eco:b4084"/>
<dbReference type="KEGG" id="ecoc:C3026_22080"/>
<dbReference type="PATRIC" id="fig|1411691.4.peg.2616"/>
<dbReference type="EchoBASE" id="EB1899"/>
<dbReference type="eggNOG" id="COG1940">
    <property type="taxonomic scope" value="Bacteria"/>
</dbReference>
<dbReference type="HOGENOM" id="CLU_036604_0_1_6"/>
<dbReference type="InParanoid" id="P32718"/>
<dbReference type="OMA" id="VNHLMLW"/>
<dbReference type="OrthoDB" id="9810372at2"/>
<dbReference type="PhylomeDB" id="P32718"/>
<dbReference type="BioCyc" id="EcoCyc:EG11956-MONOMER"/>
<dbReference type="BioCyc" id="MetaCyc:EG11956-MONOMER"/>
<dbReference type="SABIO-RK" id="P32718"/>
<dbReference type="UniPathway" id="UPA00361"/>
<dbReference type="EvolutionaryTrace" id="P32718"/>
<dbReference type="PRO" id="PR:P32718"/>
<dbReference type="Proteomes" id="UP000000625">
    <property type="component" value="Chromosome"/>
</dbReference>
<dbReference type="GO" id="GO:0005524">
    <property type="term" value="F:ATP binding"/>
    <property type="evidence" value="ECO:0007669"/>
    <property type="project" value="UniProtKB-UniRule"/>
</dbReference>
<dbReference type="GO" id="GO:0008787">
    <property type="term" value="F:D-allose kinase activity"/>
    <property type="evidence" value="ECO:0000314"/>
    <property type="project" value="EcoCyc"/>
</dbReference>
<dbReference type="GO" id="GO:0004340">
    <property type="term" value="F:glucokinase activity"/>
    <property type="evidence" value="ECO:0000314"/>
    <property type="project" value="EcoCyc"/>
</dbReference>
<dbReference type="GO" id="GO:0004396">
    <property type="term" value="F:hexokinase activity"/>
    <property type="evidence" value="ECO:0000318"/>
    <property type="project" value="GO_Central"/>
</dbReference>
<dbReference type="GO" id="GO:0019316">
    <property type="term" value="P:D-allose catabolic process"/>
    <property type="evidence" value="ECO:0000314"/>
    <property type="project" value="EcoCyc"/>
</dbReference>
<dbReference type="CDD" id="cd24070">
    <property type="entry name" value="ASKHA_NBD_ROK_AlsK"/>
    <property type="match status" value="1"/>
</dbReference>
<dbReference type="FunFam" id="3.30.420.40:FF:000230">
    <property type="entry name" value="D-allose kinase"/>
    <property type="match status" value="1"/>
</dbReference>
<dbReference type="Gene3D" id="3.30.420.40">
    <property type="match status" value="2"/>
</dbReference>
<dbReference type="HAMAP" id="MF_00988">
    <property type="entry name" value="Allose_kinase"/>
    <property type="match status" value="1"/>
</dbReference>
<dbReference type="InterPro" id="IPR030883">
    <property type="entry name" value="AlsK"/>
</dbReference>
<dbReference type="InterPro" id="IPR043129">
    <property type="entry name" value="ATPase_NBD"/>
</dbReference>
<dbReference type="InterPro" id="IPR000600">
    <property type="entry name" value="ROK"/>
</dbReference>
<dbReference type="InterPro" id="IPR049874">
    <property type="entry name" value="ROK_cs"/>
</dbReference>
<dbReference type="NCBIfam" id="NF007251">
    <property type="entry name" value="PRK09698.1"/>
    <property type="match status" value="1"/>
</dbReference>
<dbReference type="PANTHER" id="PTHR18964:SF174">
    <property type="entry name" value="D-ALLOSE KINASE-RELATED"/>
    <property type="match status" value="1"/>
</dbReference>
<dbReference type="PANTHER" id="PTHR18964">
    <property type="entry name" value="ROK (REPRESSOR, ORF, KINASE) FAMILY"/>
    <property type="match status" value="1"/>
</dbReference>
<dbReference type="Pfam" id="PF00480">
    <property type="entry name" value="ROK"/>
    <property type="match status" value="1"/>
</dbReference>
<dbReference type="SUPFAM" id="SSF53067">
    <property type="entry name" value="Actin-like ATPase domain"/>
    <property type="match status" value="1"/>
</dbReference>
<dbReference type="PROSITE" id="PS01125">
    <property type="entry name" value="ROK"/>
    <property type="match status" value="1"/>
</dbReference>
<name>ALSK_ECOLI</name>
<feature type="chain" id="PRO_0000095688" description="D-allose kinase">
    <location>
        <begin position="1"/>
        <end position="309"/>
    </location>
</feature>
<feature type="binding site" evidence="1">
    <location>
        <begin position="10"/>
        <end position="17"/>
    </location>
    <ligand>
        <name>ATP</name>
        <dbReference type="ChEBI" id="CHEBI:30616"/>
    </ligand>
</feature>
<feature type="binding site" evidence="1">
    <location>
        <begin position="142"/>
        <end position="149"/>
    </location>
    <ligand>
        <name>ATP</name>
        <dbReference type="ChEBI" id="CHEBI:30616"/>
    </ligand>
</feature>
<feature type="mutagenesis site" description="60-fold increase in catalytic efficiency for glucose phosphorylation. 45-fold increase in D-glucose affinity. No change in catalytic efficiency for D-allose phosphorylation." evidence="2">
    <original>A</original>
    <variation>G</variation>
    <location>
        <position position="73"/>
    </location>
</feature>
<feature type="mutagenesis site" description="10-fold increase in catalytic efficiency for glucose phosphorylation. Slight increase in catalytic efficiency for D-allose phosphorylation." evidence="2">
    <original>F</original>
    <variation>L</variation>
    <location>
        <position position="145"/>
    </location>
</feature>
<feature type="sequence conflict" description="In Ref. 3; BAE78087." evidence="4" ref="3">
    <original>AP</original>
    <variation>EGANKRGNSSRLTQSFHFFMFEPIFSPVNALNQPI</variation>
    <location>
        <begin position="308"/>
        <end position="309"/>
    </location>
</feature>
<feature type="strand" evidence="5">
    <location>
        <begin position="5"/>
        <end position="13"/>
    </location>
</feature>
<feature type="strand" evidence="5">
    <location>
        <begin position="15"/>
        <end position="24"/>
    </location>
</feature>
<feature type="strand" evidence="5">
    <location>
        <begin position="29"/>
        <end position="36"/>
    </location>
</feature>
<feature type="helix" evidence="5">
    <location>
        <begin position="37"/>
        <end position="41"/>
    </location>
</feature>
<feature type="helix" evidence="5">
    <location>
        <begin position="45"/>
        <end position="60"/>
    </location>
</feature>
<feature type="strand" evidence="5">
    <location>
        <begin position="62"/>
        <end position="73"/>
    </location>
</feature>
<feature type="strand" evidence="5">
    <location>
        <begin position="87"/>
        <end position="89"/>
    </location>
</feature>
<feature type="helix" evidence="5">
    <location>
        <begin position="92"/>
        <end position="95"/>
    </location>
</feature>
<feature type="helix" evidence="5">
    <location>
        <begin position="98"/>
        <end position="106"/>
    </location>
</feature>
<feature type="strand" evidence="5">
    <location>
        <begin position="110"/>
        <end position="114"/>
    </location>
</feature>
<feature type="helix" evidence="5">
    <location>
        <begin position="115"/>
        <end position="126"/>
    </location>
</feature>
<feature type="strand" evidence="5">
    <location>
        <begin position="134"/>
        <end position="149"/>
    </location>
</feature>
<feature type="strand" evidence="5">
    <location>
        <begin position="152"/>
        <end position="154"/>
    </location>
</feature>
<feature type="strand" evidence="5">
    <location>
        <begin position="157"/>
        <end position="159"/>
    </location>
</feature>
<feature type="strand" evidence="5">
    <location>
        <begin position="187"/>
        <end position="189"/>
    </location>
</feature>
<feature type="helix" evidence="5">
    <location>
        <begin position="190"/>
        <end position="197"/>
    </location>
</feature>
<feature type="helix" evidence="5">
    <location>
        <begin position="206"/>
        <end position="208"/>
    </location>
</feature>
<feature type="helix" evidence="5">
    <location>
        <begin position="209"/>
        <end position="213"/>
    </location>
</feature>
<feature type="helix" evidence="5">
    <location>
        <begin position="217"/>
        <end position="237"/>
    </location>
</feature>
<feature type="strand" evidence="5">
    <location>
        <begin position="240"/>
        <end position="245"/>
    </location>
</feature>
<feature type="turn" evidence="5">
    <location>
        <begin position="247"/>
        <end position="250"/>
    </location>
</feature>
<feature type="helix" evidence="5">
    <location>
        <begin position="256"/>
        <end position="265"/>
    </location>
</feature>
<feature type="turn" evidence="5">
    <location>
        <begin position="269"/>
        <end position="275"/>
    </location>
</feature>
<feature type="strand" evidence="5">
    <location>
        <begin position="277"/>
        <end position="280"/>
    </location>
</feature>
<feature type="helix" evidence="5">
    <location>
        <begin position="287"/>
        <end position="300"/>
    </location>
</feature>
<organism>
    <name type="scientific">Escherichia coli (strain K12)</name>
    <dbReference type="NCBI Taxonomy" id="83333"/>
    <lineage>
        <taxon>Bacteria</taxon>
        <taxon>Pseudomonadati</taxon>
        <taxon>Pseudomonadota</taxon>
        <taxon>Gammaproteobacteria</taxon>
        <taxon>Enterobacterales</taxon>
        <taxon>Enterobacteriaceae</taxon>
        <taxon>Escherichia</taxon>
    </lineage>
</organism>
<keyword id="KW-0002">3D-structure</keyword>
<keyword id="KW-0067">ATP-binding</keyword>
<keyword id="KW-0119">Carbohydrate metabolism</keyword>
<keyword id="KW-0418">Kinase</keyword>
<keyword id="KW-0547">Nucleotide-binding</keyword>
<keyword id="KW-1185">Reference proteome</keyword>
<keyword id="KW-0808">Transferase</keyword>
<proteinExistence type="evidence at protein level"/>
<comment type="function">
    <text evidence="1 2 3">Catalyzes the phosphorylation of D-allose to D-allose 6-phosphate. Also has low level glucokinase activity in vitro.</text>
</comment>
<comment type="catalytic activity">
    <reaction evidence="1 2">
        <text>D-allose + ATP = D-allose 6-phosphate + ADP + H(+)</text>
        <dbReference type="Rhea" id="RHEA:14805"/>
        <dbReference type="ChEBI" id="CHEBI:15378"/>
        <dbReference type="ChEBI" id="CHEBI:30616"/>
        <dbReference type="ChEBI" id="CHEBI:40822"/>
        <dbReference type="ChEBI" id="CHEBI:58328"/>
        <dbReference type="ChEBI" id="CHEBI:456216"/>
        <dbReference type="EC" id="2.7.1.55"/>
    </reaction>
</comment>
<comment type="biophysicochemical properties">
    <kinetics>
        <KM evidence="2">0.19 mM for D-allose (at 25 degrees Celsius and pH 7.6)</KM>
        <KM evidence="2">0.27 mM for ATP (at 25 degrees Celsius and pH 7.6)</KM>
        <KM evidence="2">29 mM for D-glucose (at 25 degrees Celsius and pH 7.6)</KM>
        <KM evidence="2">210 mM for D-altrose (at 25 degrees Celsius and pH 7.6)</KM>
        <KM evidence="2">380 mM for 2'-deoxy-D-glucose (at 25 degrees Celsius and pH 7.6)</KM>
        <KM evidence="2">390 mM for D-mannose (at 25 degrees Celsius and pH 7.6)</KM>
        <text>Catalytic efficiency with D-allose as substrate is 735-fold higher than that with D-glucose.</text>
    </kinetics>
</comment>
<comment type="pathway">
    <text evidence="1">Carbohydrate degradation; D-allose degradation.</text>
</comment>
<comment type="similarity">
    <text evidence="1">Belongs to the ROK (NagC/XylR) family.</text>
</comment>
<sequence length="309" mass="33821">MQKQHNVVAGVDMGATHIRFCLRTAEGETLHCEKKRTAEVIAPGLVSGIGEMIDEQLRRFNARCHGLVMGFPALVSKDKRTIISTPNLPLTAADLYDLADKLENTLNCPVEFSRDVNLQLSWDVVENRLTQQLVLAAYLGTGMGFAVWMNGAPWTGAHGVAGELGHIPLGDMTQHCACGNPGCLETNCSGMALRRWYEQQPRNYPLRDLFVHAENAPFVQSLLENAARAIATSINLFDPDAVILGGGVMDMPAFPRETLVAMTQKYLRRPLPHQVVRFIAASSSDFNGAQGAAILAHQRFLPQFCAKAP</sequence>
<gene>
    <name evidence="1" type="primary">alsK</name>
    <name type="synonym">yjcT</name>
    <name type="ordered locus">b4084</name>
    <name type="ordered locus">JW5724</name>
</gene>
<evidence type="ECO:0000255" key="1">
    <source>
        <dbReference type="HAMAP-Rule" id="MF_00988"/>
    </source>
</evidence>
<evidence type="ECO:0000269" key="2">
    <source>
    </source>
</evidence>
<evidence type="ECO:0000269" key="3">
    <source>
    </source>
</evidence>
<evidence type="ECO:0000305" key="4"/>
<evidence type="ECO:0007829" key="5">
    <source>
        <dbReference type="PDB" id="3HTV"/>
    </source>
</evidence>
<protein>
    <recommendedName>
        <fullName evidence="1">D-allose kinase</fullName>
        <shortName evidence="1">Allokinase</shortName>
        <ecNumber evidence="1">2.7.1.55</ecNumber>
    </recommendedName>
</protein>